<dbReference type="EMBL" id="CR382123">
    <property type="protein sequence ID" value="CAH01790.1"/>
    <property type="molecule type" value="Genomic_DNA"/>
</dbReference>
<dbReference type="RefSeq" id="XP_452939.1">
    <property type="nucleotide sequence ID" value="XM_452939.1"/>
</dbReference>
<dbReference type="SMR" id="Q6CT00"/>
<dbReference type="FunCoup" id="Q6CT00">
    <property type="interactions" value="832"/>
</dbReference>
<dbReference type="STRING" id="284590.Q6CT00"/>
<dbReference type="PaxDb" id="284590-Q6CT00"/>
<dbReference type="KEGG" id="kla:KLLA0_C16533g"/>
<dbReference type="eggNOG" id="KOG4328">
    <property type="taxonomic scope" value="Eukaryota"/>
</dbReference>
<dbReference type="HOGENOM" id="CLU_017019_1_1_1"/>
<dbReference type="InParanoid" id="Q6CT00"/>
<dbReference type="OMA" id="DPNTLYW"/>
<dbReference type="Proteomes" id="UP000000598">
    <property type="component" value="Chromosome C"/>
</dbReference>
<dbReference type="GO" id="GO:0005634">
    <property type="term" value="C:nucleus"/>
    <property type="evidence" value="ECO:0007669"/>
    <property type="project" value="TreeGrafter"/>
</dbReference>
<dbReference type="GO" id="GO:0003677">
    <property type="term" value="F:DNA binding"/>
    <property type="evidence" value="ECO:0007669"/>
    <property type="project" value="UniProtKB-KW"/>
</dbReference>
<dbReference type="GO" id="GO:0006974">
    <property type="term" value="P:DNA damage response"/>
    <property type="evidence" value="ECO:0007669"/>
    <property type="project" value="UniProtKB-KW"/>
</dbReference>
<dbReference type="GO" id="GO:2000001">
    <property type="term" value="P:regulation of DNA damage checkpoint"/>
    <property type="evidence" value="ECO:0007669"/>
    <property type="project" value="TreeGrafter"/>
</dbReference>
<dbReference type="Gene3D" id="2.130.10.10">
    <property type="entry name" value="YVTN repeat-like/Quinoprotein amine dehydrogenase"/>
    <property type="match status" value="1"/>
</dbReference>
<dbReference type="InterPro" id="IPR015943">
    <property type="entry name" value="WD40/YVTN_repeat-like_dom_sf"/>
</dbReference>
<dbReference type="InterPro" id="IPR019775">
    <property type="entry name" value="WD40_repeat_CS"/>
</dbReference>
<dbReference type="InterPro" id="IPR036322">
    <property type="entry name" value="WD40_repeat_dom_sf"/>
</dbReference>
<dbReference type="InterPro" id="IPR001680">
    <property type="entry name" value="WD40_rpt"/>
</dbReference>
<dbReference type="InterPro" id="IPR050853">
    <property type="entry name" value="WD_repeat_DNA-damage-binding"/>
</dbReference>
<dbReference type="PANTHER" id="PTHR14773">
    <property type="entry name" value="WD REPEAT-CONTAINING PROTEIN 76"/>
    <property type="match status" value="1"/>
</dbReference>
<dbReference type="PANTHER" id="PTHR14773:SF0">
    <property type="entry name" value="WD REPEAT-CONTAINING PROTEIN 76"/>
    <property type="match status" value="1"/>
</dbReference>
<dbReference type="Pfam" id="PF00400">
    <property type="entry name" value="WD40"/>
    <property type="match status" value="2"/>
</dbReference>
<dbReference type="SMART" id="SM00320">
    <property type="entry name" value="WD40"/>
    <property type="match status" value="3"/>
</dbReference>
<dbReference type="SUPFAM" id="SSF50978">
    <property type="entry name" value="WD40 repeat-like"/>
    <property type="match status" value="1"/>
</dbReference>
<dbReference type="PROSITE" id="PS00678">
    <property type="entry name" value="WD_REPEATS_1"/>
    <property type="match status" value="1"/>
</dbReference>
<dbReference type="PROSITE" id="PS50082">
    <property type="entry name" value="WD_REPEATS_2"/>
    <property type="match status" value="1"/>
</dbReference>
<name>CMR1_KLULA</name>
<proteinExistence type="inferred from homology"/>
<accession>Q6CT00</accession>
<evidence type="ECO:0000250" key="1">
    <source>
        <dbReference type="UniProtKB" id="Q12510"/>
    </source>
</evidence>
<evidence type="ECO:0000255" key="2"/>
<evidence type="ECO:0000256" key="3">
    <source>
        <dbReference type="SAM" id="MobiDB-lite"/>
    </source>
</evidence>
<evidence type="ECO:0000305" key="4"/>
<keyword id="KW-0227">DNA damage</keyword>
<keyword id="KW-0238">DNA-binding</keyword>
<keyword id="KW-1185">Reference proteome</keyword>
<keyword id="KW-0677">Repeat</keyword>
<keyword id="KW-0853">WD repeat</keyword>
<gene>
    <name type="ordered locus">KLLA0C16533g</name>
</gene>
<feature type="chain" id="PRO_0000351109" description="DNA damage-binding protein CMR1">
    <location>
        <begin position="1"/>
        <end position="512"/>
    </location>
</feature>
<feature type="repeat" description="WD 1" evidence="2">
    <location>
        <begin position="189"/>
        <end position="230"/>
    </location>
</feature>
<feature type="repeat" description="WD 2" evidence="2">
    <location>
        <begin position="241"/>
        <end position="281"/>
    </location>
</feature>
<feature type="repeat" description="WD 3" evidence="2">
    <location>
        <begin position="289"/>
        <end position="329"/>
    </location>
</feature>
<feature type="repeat" description="WD 4" evidence="2">
    <location>
        <begin position="333"/>
        <end position="373"/>
    </location>
</feature>
<feature type="repeat" description="WD 5" evidence="2">
    <location>
        <begin position="390"/>
        <end position="429"/>
    </location>
</feature>
<feature type="repeat" description="WD 6" evidence="2">
    <location>
        <begin position="442"/>
        <end position="481"/>
    </location>
</feature>
<feature type="repeat" description="WD 7" evidence="2">
    <location>
        <begin position="482"/>
        <end position="512"/>
    </location>
</feature>
<feature type="region of interest" description="Disordered" evidence="3">
    <location>
        <begin position="32"/>
        <end position="96"/>
    </location>
</feature>
<feature type="compositionally biased region" description="Basic and acidic residues" evidence="3">
    <location>
        <begin position="34"/>
        <end position="46"/>
    </location>
</feature>
<feature type="compositionally biased region" description="Basic residues" evidence="3">
    <location>
        <begin position="47"/>
        <end position="60"/>
    </location>
</feature>
<organism>
    <name type="scientific">Kluyveromyces lactis (strain ATCC 8585 / CBS 2359 / DSM 70799 / NBRC 1267 / NRRL Y-1140 / WM37)</name>
    <name type="common">Yeast</name>
    <name type="synonym">Candida sphaerica</name>
    <dbReference type="NCBI Taxonomy" id="284590"/>
    <lineage>
        <taxon>Eukaryota</taxon>
        <taxon>Fungi</taxon>
        <taxon>Dikarya</taxon>
        <taxon>Ascomycota</taxon>
        <taxon>Saccharomycotina</taxon>
        <taxon>Saccharomycetes</taxon>
        <taxon>Saccharomycetales</taxon>
        <taxon>Saccharomycetaceae</taxon>
        <taxon>Kluyveromyces</taxon>
    </lineage>
</organism>
<comment type="function">
    <text evidence="1">DNA-binding protein that binds to both single- and double-stranded DNA. Binds preferentially to UV-damaged DNA. May be involved in DNA-metabolic processes.</text>
</comment>
<comment type="similarity">
    <text evidence="4">Belongs to the WD repeat DDB2/WDR76 family.</text>
</comment>
<sequence length="512" mass="58022">MGELTEFQKKRLENIKRNNDLLKKLNLNNVSSQIKREAGVEDEHLDRKRKKKAGSAKKAVKKEPKPAAIPTRRSRRLRGENVDGNGIPNVNDNQLLKMGQSDSTPELEAIDELKNTALSGDVKLSDLIKSENEEELLDKFKSFANKNFSSGDFFKELQQQQVPTPEIKQLQEDFDLKLYDIFQPNEIKLTAERISATFFHPSVDKKLVICGDTAGNVGLWNVRETQPEDELEEPDITKVKLFTKNVGRIDTYATDSSRLLAASYDGYLRSINLQDMNSEEILVLKNEYDDPLGISDFQFNYNDPNVLFMTTLSGEFTTFDVRTKPTEINLKRLSDKKIGSFSINPKRPYEIATGSLDRTLKIWDTRKIVNKPEWSQYEDFASHEIVATYDSRLSVSAVSYSPMDETLVCNGYDDTIRLFDVSGTLPEDLQPKLTLKHNCQTGRWTSILKARFKLNMDVFAIANMKRAIDIYTSSGVQLAHLPTATVPAVISWHPTQNWVVGGNSSGKAFLFT</sequence>
<reference key="1">
    <citation type="journal article" date="2004" name="Nature">
        <title>Genome evolution in yeasts.</title>
        <authorList>
            <person name="Dujon B."/>
            <person name="Sherman D."/>
            <person name="Fischer G."/>
            <person name="Durrens P."/>
            <person name="Casaregola S."/>
            <person name="Lafontaine I."/>
            <person name="de Montigny J."/>
            <person name="Marck C."/>
            <person name="Neuveglise C."/>
            <person name="Talla E."/>
            <person name="Goffard N."/>
            <person name="Frangeul L."/>
            <person name="Aigle M."/>
            <person name="Anthouard V."/>
            <person name="Babour A."/>
            <person name="Barbe V."/>
            <person name="Barnay S."/>
            <person name="Blanchin S."/>
            <person name="Beckerich J.-M."/>
            <person name="Beyne E."/>
            <person name="Bleykasten C."/>
            <person name="Boisrame A."/>
            <person name="Boyer J."/>
            <person name="Cattolico L."/>
            <person name="Confanioleri F."/>
            <person name="de Daruvar A."/>
            <person name="Despons L."/>
            <person name="Fabre E."/>
            <person name="Fairhead C."/>
            <person name="Ferry-Dumazet H."/>
            <person name="Groppi A."/>
            <person name="Hantraye F."/>
            <person name="Hennequin C."/>
            <person name="Jauniaux N."/>
            <person name="Joyet P."/>
            <person name="Kachouri R."/>
            <person name="Kerrest A."/>
            <person name="Koszul R."/>
            <person name="Lemaire M."/>
            <person name="Lesur I."/>
            <person name="Ma L."/>
            <person name="Muller H."/>
            <person name="Nicaud J.-M."/>
            <person name="Nikolski M."/>
            <person name="Oztas S."/>
            <person name="Ozier-Kalogeropoulos O."/>
            <person name="Pellenz S."/>
            <person name="Potier S."/>
            <person name="Richard G.-F."/>
            <person name="Straub M.-L."/>
            <person name="Suleau A."/>
            <person name="Swennen D."/>
            <person name="Tekaia F."/>
            <person name="Wesolowski-Louvel M."/>
            <person name="Westhof E."/>
            <person name="Wirth B."/>
            <person name="Zeniou-Meyer M."/>
            <person name="Zivanovic Y."/>
            <person name="Bolotin-Fukuhara M."/>
            <person name="Thierry A."/>
            <person name="Bouchier C."/>
            <person name="Caudron B."/>
            <person name="Scarpelli C."/>
            <person name="Gaillardin C."/>
            <person name="Weissenbach J."/>
            <person name="Wincker P."/>
            <person name="Souciet J.-L."/>
        </authorList>
    </citation>
    <scope>NUCLEOTIDE SEQUENCE [LARGE SCALE GENOMIC DNA]</scope>
    <source>
        <strain>ATCC 8585 / CBS 2359 / DSM 70799 / NBRC 1267 / NRRL Y-1140 / WM37</strain>
    </source>
</reference>
<protein>
    <recommendedName>
        <fullName evidence="1">DNA damage-binding protein CMR1</fullName>
    </recommendedName>
</protein>